<comment type="function">
    <text evidence="1">Bifunctional serine/threonine kinase and phosphorylase involved in the regulation of the pyruvate, phosphate dikinase (PPDK) by catalyzing its phosphorylation/dephosphorylation.</text>
</comment>
<comment type="catalytic activity">
    <reaction evidence="1">
        <text>N(tele)-phospho-L-histidyl/L-threonyl-[pyruvate, phosphate dikinase] + ADP = N(tele)-phospho-L-histidyl/O-phospho-L-threonyl-[pyruvate, phosphate dikinase] + AMP + H(+)</text>
        <dbReference type="Rhea" id="RHEA:43692"/>
        <dbReference type="Rhea" id="RHEA-COMP:10650"/>
        <dbReference type="Rhea" id="RHEA-COMP:10651"/>
        <dbReference type="ChEBI" id="CHEBI:15378"/>
        <dbReference type="ChEBI" id="CHEBI:30013"/>
        <dbReference type="ChEBI" id="CHEBI:61977"/>
        <dbReference type="ChEBI" id="CHEBI:83586"/>
        <dbReference type="ChEBI" id="CHEBI:456215"/>
        <dbReference type="ChEBI" id="CHEBI:456216"/>
        <dbReference type="EC" id="2.7.11.32"/>
    </reaction>
</comment>
<comment type="catalytic activity">
    <reaction evidence="1">
        <text>N(tele)-phospho-L-histidyl/O-phospho-L-threonyl-[pyruvate, phosphate dikinase] + phosphate + H(+) = N(tele)-phospho-L-histidyl/L-threonyl-[pyruvate, phosphate dikinase] + diphosphate</text>
        <dbReference type="Rhea" id="RHEA:43696"/>
        <dbReference type="Rhea" id="RHEA-COMP:10650"/>
        <dbReference type="Rhea" id="RHEA-COMP:10651"/>
        <dbReference type="ChEBI" id="CHEBI:15378"/>
        <dbReference type="ChEBI" id="CHEBI:30013"/>
        <dbReference type="ChEBI" id="CHEBI:33019"/>
        <dbReference type="ChEBI" id="CHEBI:43474"/>
        <dbReference type="ChEBI" id="CHEBI:61977"/>
        <dbReference type="ChEBI" id="CHEBI:83586"/>
        <dbReference type="EC" id="2.7.4.27"/>
    </reaction>
</comment>
<comment type="similarity">
    <text evidence="1">Belongs to the pyruvate, phosphate/water dikinase regulatory protein family. PDRP subfamily.</text>
</comment>
<organism>
    <name type="scientific">Geobacter sulfurreducens (strain ATCC 51573 / DSM 12127 / PCA)</name>
    <dbReference type="NCBI Taxonomy" id="243231"/>
    <lineage>
        <taxon>Bacteria</taxon>
        <taxon>Pseudomonadati</taxon>
        <taxon>Thermodesulfobacteriota</taxon>
        <taxon>Desulfuromonadia</taxon>
        <taxon>Geobacterales</taxon>
        <taxon>Geobacteraceae</taxon>
        <taxon>Geobacter</taxon>
    </lineage>
</organism>
<protein>
    <recommendedName>
        <fullName evidence="1">Putative pyruvate, phosphate dikinase regulatory protein</fullName>
        <shortName evidence="1">PPDK regulatory protein</shortName>
        <ecNumber evidence="1">2.7.11.32</ecNumber>
        <ecNumber evidence="1">2.7.4.27</ecNumber>
    </recommendedName>
</protein>
<sequence>MKRSIKHIYLLSDATGETVERVVRAALSQFRDVEARFHRVTRIRSREDVIWALEEVLREPGMVVYTLVDTELAQLLRDEAEAHGLDAIDLISPLLFKLSDFFGEAPQKEPGLLHQINSEYHKRVDAVDFTVKHDDGQDPRGLAKADFILVGVSRSSKTPLSMYLAHKGYKVANVPIVKGIDPPPELYKVDQKRVVGLIIDAERLVQIRTARLRNLGQMPKGSYADYERIEEELEFCRRLYRRNPQWLVIDVTKKSVEESAAEIIQKLAG</sequence>
<evidence type="ECO:0000255" key="1">
    <source>
        <dbReference type="HAMAP-Rule" id="MF_00921"/>
    </source>
</evidence>
<keyword id="KW-0418">Kinase</keyword>
<keyword id="KW-0547">Nucleotide-binding</keyword>
<keyword id="KW-1185">Reference proteome</keyword>
<keyword id="KW-0723">Serine/threonine-protein kinase</keyword>
<keyword id="KW-0808">Transferase</keyword>
<proteinExistence type="inferred from homology"/>
<name>PDRP_GEOSL</name>
<accession>Q74G02</accession>
<dbReference type="EC" id="2.7.11.32" evidence="1"/>
<dbReference type="EC" id="2.7.4.27" evidence="1"/>
<dbReference type="EMBL" id="AE017180">
    <property type="protein sequence ID" value="AAR33782.1"/>
    <property type="molecule type" value="Genomic_DNA"/>
</dbReference>
<dbReference type="RefSeq" id="NP_951509.1">
    <property type="nucleotide sequence ID" value="NC_002939.5"/>
</dbReference>
<dbReference type="RefSeq" id="WP_010941117.1">
    <property type="nucleotide sequence ID" value="NC_002939.5"/>
</dbReference>
<dbReference type="SMR" id="Q74G02"/>
<dbReference type="FunCoup" id="Q74G02">
    <property type="interactions" value="263"/>
</dbReference>
<dbReference type="STRING" id="243231.GSU0450"/>
<dbReference type="EnsemblBacteria" id="AAR33782">
    <property type="protein sequence ID" value="AAR33782"/>
    <property type="gene ID" value="GSU0450"/>
</dbReference>
<dbReference type="KEGG" id="gsu:GSU0450"/>
<dbReference type="PATRIC" id="fig|243231.5.peg.447"/>
<dbReference type="eggNOG" id="COG1806">
    <property type="taxonomic scope" value="Bacteria"/>
</dbReference>
<dbReference type="HOGENOM" id="CLU_046206_2_1_7"/>
<dbReference type="InParanoid" id="Q74G02"/>
<dbReference type="OrthoDB" id="9782201at2"/>
<dbReference type="Proteomes" id="UP000000577">
    <property type="component" value="Chromosome"/>
</dbReference>
<dbReference type="GO" id="GO:0043531">
    <property type="term" value="F:ADP binding"/>
    <property type="evidence" value="ECO:0007669"/>
    <property type="project" value="UniProtKB-UniRule"/>
</dbReference>
<dbReference type="GO" id="GO:0005524">
    <property type="term" value="F:ATP binding"/>
    <property type="evidence" value="ECO:0007669"/>
    <property type="project" value="InterPro"/>
</dbReference>
<dbReference type="GO" id="GO:0016776">
    <property type="term" value="F:phosphotransferase activity, phosphate group as acceptor"/>
    <property type="evidence" value="ECO:0007669"/>
    <property type="project" value="UniProtKB-UniRule"/>
</dbReference>
<dbReference type="GO" id="GO:0004674">
    <property type="term" value="F:protein serine/threonine kinase activity"/>
    <property type="evidence" value="ECO:0007669"/>
    <property type="project" value="UniProtKB-UniRule"/>
</dbReference>
<dbReference type="HAMAP" id="MF_00921">
    <property type="entry name" value="PDRP"/>
    <property type="match status" value="1"/>
</dbReference>
<dbReference type="InterPro" id="IPR005177">
    <property type="entry name" value="Kinase-pyrophosphorylase"/>
</dbReference>
<dbReference type="InterPro" id="IPR026565">
    <property type="entry name" value="PPDK_reg"/>
</dbReference>
<dbReference type="NCBIfam" id="NF003742">
    <property type="entry name" value="PRK05339.1"/>
    <property type="match status" value="1"/>
</dbReference>
<dbReference type="PANTHER" id="PTHR31756">
    <property type="entry name" value="PYRUVATE, PHOSPHATE DIKINASE REGULATORY PROTEIN 1, CHLOROPLASTIC"/>
    <property type="match status" value="1"/>
</dbReference>
<dbReference type="PANTHER" id="PTHR31756:SF3">
    <property type="entry name" value="PYRUVATE, PHOSPHATE DIKINASE REGULATORY PROTEIN 1, CHLOROPLASTIC"/>
    <property type="match status" value="1"/>
</dbReference>
<dbReference type="Pfam" id="PF03618">
    <property type="entry name" value="Kinase-PPPase"/>
    <property type="match status" value="1"/>
</dbReference>
<gene>
    <name type="ordered locus">GSU0450</name>
</gene>
<feature type="chain" id="PRO_0000196663" description="Putative pyruvate, phosphate dikinase regulatory protein">
    <location>
        <begin position="1"/>
        <end position="269"/>
    </location>
</feature>
<feature type="binding site" evidence="1">
    <location>
        <begin position="151"/>
        <end position="158"/>
    </location>
    <ligand>
        <name>ADP</name>
        <dbReference type="ChEBI" id="CHEBI:456216"/>
    </ligand>
</feature>
<reference key="1">
    <citation type="journal article" date="2003" name="Science">
        <title>Genome of Geobacter sulfurreducens: metal reduction in subsurface environments.</title>
        <authorList>
            <person name="Methe B.A."/>
            <person name="Nelson K.E."/>
            <person name="Eisen J.A."/>
            <person name="Paulsen I.T."/>
            <person name="Nelson W.C."/>
            <person name="Heidelberg J.F."/>
            <person name="Wu D."/>
            <person name="Wu M."/>
            <person name="Ward N.L."/>
            <person name="Beanan M.J."/>
            <person name="Dodson R.J."/>
            <person name="Madupu R."/>
            <person name="Brinkac L.M."/>
            <person name="Daugherty S.C."/>
            <person name="DeBoy R.T."/>
            <person name="Durkin A.S."/>
            <person name="Gwinn M.L."/>
            <person name="Kolonay J.F."/>
            <person name="Sullivan S.A."/>
            <person name="Haft D.H."/>
            <person name="Selengut J."/>
            <person name="Davidsen T.M."/>
            <person name="Zafar N."/>
            <person name="White O."/>
            <person name="Tran B."/>
            <person name="Romero C."/>
            <person name="Forberger H.A."/>
            <person name="Weidman J.F."/>
            <person name="Khouri H.M."/>
            <person name="Feldblyum T.V."/>
            <person name="Utterback T.R."/>
            <person name="Van Aken S.E."/>
            <person name="Lovley D.R."/>
            <person name="Fraser C.M."/>
        </authorList>
    </citation>
    <scope>NUCLEOTIDE SEQUENCE [LARGE SCALE GENOMIC DNA]</scope>
    <source>
        <strain>ATCC 51573 / DSM 12127 / PCA</strain>
    </source>
</reference>